<name>ACCA_METNO</name>
<gene>
    <name evidence="1" type="primary">accA</name>
    <name type="ordered locus">Mnod_4594</name>
</gene>
<proteinExistence type="inferred from homology"/>
<keyword id="KW-0067">ATP-binding</keyword>
<keyword id="KW-0963">Cytoplasm</keyword>
<keyword id="KW-0275">Fatty acid biosynthesis</keyword>
<keyword id="KW-0276">Fatty acid metabolism</keyword>
<keyword id="KW-0444">Lipid biosynthesis</keyword>
<keyword id="KW-0443">Lipid metabolism</keyword>
<keyword id="KW-0547">Nucleotide-binding</keyword>
<keyword id="KW-1185">Reference proteome</keyword>
<keyword id="KW-0808">Transferase</keyword>
<organism>
    <name type="scientific">Methylobacterium nodulans (strain LMG 21967 / CNCM I-2342 / ORS 2060)</name>
    <dbReference type="NCBI Taxonomy" id="460265"/>
    <lineage>
        <taxon>Bacteria</taxon>
        <taxon>Pseudomonadati</taxon>
        <taxon>Pseudomonadota</taxon>
        <taxon>Alphaproteobacteria</taxon>
        <taxon>Hyphomicrobiales</taxon>
        <taxon>Methylobacteriaceae</taxon>
        <taxon>Methylobacterium</taxon>
    </lineage>
</organism>
<feature type="chain" id="PRO_1000148746" description="Acetyl-coenzyme A carboxylase carboxyl transferase subunit alpha">
    <location>
        <begin position="1"/>
        <end position="317"/>
    </location>
</feature>
<feature type="domain" description="CoA carboxyltransferase C-terminal" evidence="2">
    <location>
        <begin position="39"/>
        <end position="293"/>
    </location>
</feature>
<reference key="1">
    <citation type="submission" date="2009-01" db="EMBL/GenBank/DDBJ databases">
        <title>Complete sequence of chromosome of Methylobacterium nodulans ORS 2060.</title>
        <authorList>
            <consortium name="US DOE Joint Genome Institute"/>
            <person name="Lucas S."/>
            <person name="Copeland A."/>
            <person name="Lapidus A."/>
            <person name="Glavina del Rio T."/>
            <person name="Dalin E."/>
            <person name="Tice H."/>
            <person name="Bruce D."/>
            <person name="Goodwin L."/>
            <person name="Pitluck S."/>
            <person name="Sims D."/>
            <person name="Brettin T."/>
            <person name="Detter J.C."/>
            <person name="Han C."/>
            <person name="Larimer F."/>
            <person name="Land M."/>
            <person name="Hauser L."/>
            <person name="Kyrpides N."/>
            <person name="Ivanova N."/>
            <person name="Marx C.J."/>
            <person name="Richardson P."/>
        </authorList>
    </citation>
    <scope>NUCLEOTIDE SEQUENCE [LARGE SCALE GENOMIC DNA]</scope>
    <source>
        <strain>LMG 21967 / CNCM I-2342 / ORS 2060</strain>
    </source>
</reference>
<protein>
    <recommendedName>
        <fullName evidence="1">Acetyl-coenzyme A carboxylase carboxyl transferase subunit alpha</fullName>
        <shortName evidence="1">ACCase subunit alpha</shortName>
        <shortName evidence="1">Acetyl-CoA carboxylase carboxyltransferase subunit alpha</shortName>
        <ecNumber evidence="1">2.1.3.15</ecNumber>
    </recommendedName>
</protein>
<dbReference type="EC" id="2.1.3.15" evidence="1"/>
<dbReference type="EMBL" id="CP001349">
    <property type="protein sequence ID" value="ACL59461.1"/>
    <property type="molecule type" value="Genomic_DNA"/>
</dbReference>
<dbReference type="RefSeq" id="WP_015931099.1">
    <property type="nucleotide sequence ID" value="NC_011894.1"/>
</dbReference>
<dbReference type="SMR" id="B8ID69"/>
<dbReference type="STRING" id="460265.Mnod_4594"/>
<dbReference type="KEGG" id="mno:Mnod_4594"/>
<dbReference type="eggNOG" id="COG0825">
    <property type="taxonomic scope" value="Bacteria"/>
</dbReference>
<dbReference type="HOGENOM" id="CLU_015486_0_2_5"/>
<dbReference type="OrthoDB" id="9808023at2"/>
<dbReference type="UniPathway" id="UPA00655">
    <property type="reaction ID" value="UER00711"/>
</dbReference>
<dbReference type="Proteomes" id="UP000008207">
    <property type="component" value="Chromosome"/>
</dbReference>
<dbReference type="GO" id="GO:0009317">
    <property type="term" value="C:acetyl-CoA carboxylase complex"/>
    <property type="evidence" value="ECO:0007669"/>
    <property type="project" value="InterPro"/>
</dbReference>
<dbReference type="GO" id="GO:0003989">
    <property type="term" value="F:acetyl-CoA carboxylase activity"/>
    <property type="evidence" value="ECO:0007669"/>
    <property type="project" value="InterPro"/>
</dbReference>
<dbReference type="GO" id="GO:0005524">
    <property type="term" value="F:ATP binding"/>
    <property type="evidence" value="ECO:0007669"/>
    <property type="project" value="UniProtKB-KW"/>
</dbReference>
<dbReference type="GO" id="GO:0016743">
    <property type="term" value="F:carboxyl- or carbamoyltransferase activity"/>
    <property type="evidence" value="ECO:0007669"/>
    <property type="project" value="UniProtKB-UniRule"/>
</dbReference>
<dbReference type="GO" id="GO:0006633">
    <property type="term" value="P:fatty acid biosynthetic process"/>
    <property type="evidence" value="ECO:0007669"/>
    <property type="project" value="UniProtKB-KW"/>
</dbReference>
<dbReference type="GO" id="GO:2001295">
    <property type="term" value="P:malonyl-CoA biosynthetic process"/>
    <property type="evidence" value="ECO:0007669"/>
    <property type="project" value="UniProtKB-UniRule"/>
</dbReference>
<dbReference type="Gene3D" id="3.90.226.10">
    <property type="entry name" value="2-enoyl-CoA Hydratase, Chain A, domain 1"/>
    <property type="match status" value="1"/>
</dbReference>
<dbReference type="HAMAP" id="MF_00823">
    <property type="entry name" value="AcetylCoA_CT_alpha"/>
    <property type="match status" value="1"/>
</dbReference>
<dbReference type="InterPro" id="IPR001095">
    <property type="entry name" value="Acetyl_CoA_COase_a_su"/>
</dbReference>
<dbReference type="InterPro" id="IPR029045">
    <property type="entry name" value="ClpP/crotonase-like_dom_sf"/>
</dbReference>
<dbReference type="InterPro" id="IPR011763">
    <property type="entry name" value="COA_CT_C"/>
</dbReference>
<dbReference type="NCBIfam" id="TIGR00513">
    <property type="entry name" value="accA"/>
    <property type="match status" value="1"/>
</dbReference>
<dbReference type="NCBIfam" id="NF041504">
    <property type="entry name" value="AccA_sub"/>
    <property type="match status" value="1"/>
</dbReference>
<dbReference type="NCBIfam" id="NF004344">
    <property type="entry name" value="PRK05724.1"/>
    <property type="match status" value="1"/>
</dbReference>
<dbReference type="PANTHER" id="PTHR42853">
    <property type="entry name" value="ACETYL-COENZYME A CARBOXYLASE CARBOXYL TRANSFERASE SUBUNIT ALPHA"/>
    <property type="match status" value="1"/>
</dbReference>
<dbReference type="PANTHER" id="PTHR42853:SF3">
    <property type="entry name" value="ACETYL-COENZYME A CARBOXYLASE CARBOXYL TRANSFERASE SUBUNIT ALPHA, CHLOROPLASTIC"/>
    <property type="match status" value="1"/>
</dbReference>
<dbReference type="Pfam" id="PF03255">
    <property type="entry name" value="ACCA"/>
    <property type="match status" value="1"/>
</dbReference>
<dbReference type="PRINTS" id="PR01069">
    <property type="entry name" value="ACCCTRFRASEA"/>
</dbReference>
<dbReference type="SUPFAM" id="SSF52096">
    <property type="entry name" value="ClpP/crotonase"/>
    <property type="match status" value="1"/>
</dbReference>
<dbReference type="PROSITE" id="PS50989">
    <property type="entry name" value="COA_CT_CTER"/>
    <property type="match status" value="1"/>
</dbReference>
<comment type="function">
    <text evidence="1">Component of the acetyl coenzyme A carboxylase (ACC) complex. First, biotin carboxylase catalyzes the carboxylation of biotin on its carrier protein (BCCP) and then the CO(2) group is transferred by the carboxyltransferase to acetyl-CoA to form malonyl-CoA.</text>
</comment>
<comment type="catalytic activity">
    <reaction evidence="1">
        <text>N(6)-carboxybiotinyl-L-lysyl-[protein] + acetyl-CoA = N(6)-biotinyl-L-lysyl-[protein] + malonyl-CoA</text>
        <dbReference type="Rhea" id="RHEA:54728"/>
        <dbReference type="Rhea" id="RHEA-COMP:10505"/>
        <dbReference type="Rhea" id="RHEA-COMP:10506"/>
        <dbReference type="ChEBI" id="CHEBI:57288"/>
        <dbReference type="ChEBI" id="CHEBI:57384"/>
        <dbReference type="ChEBI" id="CHEBI:83144"/>
        <dbReference type="ChEBI" id="CHEBI:83145"/>
        <dbReference type="EC" id="2.1.3.15"/>
    </reaction>
</comment>
<comment type="pathway">
    <text evidence="1">Lipid metabolism; malonyl-CoA biosynthesis; malonyl-CoA from acetyl-CoA: step 1/1.</text>
</comment>
<comment type="subunit">
    <text evidence="1">Acetyl-CoA carboxylase is a heterohexamer composed of biotin carboxyl carrier protein (AccB), biotin carboxylase (AccC) and two subunits each of ACCase subunit alpha (AccA) and ACCase subunit beta (AccD).</text>
</comment>
<comment type="subcellular location">
    <subcellularLocation>
        <location evidence="1">Cytoplasm</location>
    </subcellularLocation>
</comment>
<comment type="similarity">
    <text evidence="1">Belongs to the AccA family.</text>
</comment>
<evidence type="ECO:0000255" key="1">
    <source>
        <dbReference type="HAMAP-Rule" id="MF_00823"/>
    </source>
</evidence>
<evidence type="ECO:0000255" key="2">
    <source>
        <dbReference type="PROSITE-ProRule" id="PRU01137"/>
    </source>
</evidence>
<sequence length="317" mass="33727">MRSYLDFEKPVAELEAKLEELRALGARDGAVAISDDVSRLESKAAAALAELYATLTPWQKTQVARHPQRPHFVDYCAGLIEEFTPLAGDRSFGEDEAVVGGFGRFRGRPVCVIGQEKGATTEARIRHNFGMARPEGYRKAVRLMELAGRFGLPVLTFVDTAGAYPGIEAEERGQAEAIARSTEACLALGTPNVALVIGEGGSGGAIALATANRVLMLEHAIYSVISPEGAASILWRDAGRAQDAATAMKITAQDLLRLGVIDGIVPEPTGGAHREPEAAIRAAGDALAEALTGLADLDADALREQRAQKFLEIGRRL</sequence>
<accession>B8ID69</accession>